<comment type="function">
    <text evidence="1">The glycine cleavage system catalyzes the degradation of glycine. The H protein shuttles the methylamine group of glycine from the P protein to the T protein.</text>
</comment>
<comment type="cofactor">
    <cofactor evidence="1">
        <name>(R)-lipoate</name>
        <dbReference type="ChEBI" id="CHEBI:83088"/>
    </cofactor>
    <text evidence="1">Binds 1 lipoyl cofactor covalently.</text>
</comment>
<comment type="subunit">
    <text evidence="1">The glycine cleavage system is composed of four proteins: P, T, L and H.</text>
</comment>
<comment type="similarity">
    <text evidence="1">Belongs to the GcvH family.</text>
</comment>
<gene>
    <name evidence="1" type="primary">gcvH</name>
    <name type="ordered locus">Mlut_13860</name>
</gene>
<evidence type="ECO:0000255" key="1">
    <source>
        <dbReference type="HAMAP-Rule" id="MF_00272"/>
    </source>
</evidence>
<evidence type="ECO:0000255" key="2">
    <source>
        <dbReference type="PROSITE-ProRule" id="PRU01066"/>
    </source>
</evidence>
<accession>C5CAI7</accession>
<name>GCSH_MICLC</name>
<organism>
    <name type="scientific">Micrococcus luteus (strain ATCC 4698 / DSM 20030 / JCM 1464 / CCM 169 / CCUG 5858 / IAM 1056 / NBRC 3333 / NCIMB 9278 / NCTC 2665 / VKM Ac-2230)</name>
    <name type="common">Micrococcus lysodeikticus</name>
    <dbReference type="NCBI Taxonomy" id="465515"/>
    <lineage>
        <taxon>Bacteria</taxon>
        <taxon>Bacillati</taxon>
        <taxon>Actinomycetota</taxon>
        <taxon>Actinomycetes</taxon>
        <taxon>Micrococcales</taxon>
        <taxon>Micrococcaceae</taxon>
        <taxon>Micrococcus</taxon>
    </lineage>
</organism>
<feature type="chain" id="PRO_1000204750" description="Glycine cleavage system H protein">
    <location>
        <begin position="1"/>
        <end position="128"/>
    </location>
</feature>
<feature type="domain" description="Lipoyl-binding" evidence="2">
    <location>
        <begin position="25"/>
        <end position="107"/>
    </location>
</feature>
<feature type="modified residue" description="N6-lipoyllysine" evidence="1">
    <location>
        <position position="66"/>
    </location>
</feature>
<dbReference type="EMBL" id="CP001628">
    <property type="protein sequence ID" value="ACS30891.1"/>
    <property type="molecule type" value="Genomic_DNA"/>
</dbReference>
<dbReference type="RefSeq" id="WP_002854607.1">
    <property type="nucleotide sequence ID" value="NZ_WBMF01000059.1"/>
</dbReference>
<dbReference type="SMR" id="C5CAI7"/>
<dbReference type="STRING" id="465515.Mlut_13860"/>
<dbReference type="EnsemblBacteria" id="ACS30891">
    <property type="protein sequence ID" value="ACS30891"/>
    <property type="gene ID" value="Mlut_13860"/>
</dbReference>
<dbReference type="GeneID" id="93362356"/>
<dbReference type="KEGG" id="mlu:Mlut_13860"/>
<dbReference type="eggNOG" id="COG0509">
    <property type="taxonomic scope" value="Bacteria"/>
</dbReference>
<dbReference type="HOGENOM" id="CLU_097408_2_0_11"/>
<dbReference type="Proteomes" id="UP000000738">
    <property type="component" value="Chromosome"/>
</dbReference>
<dbReference type="GO" id="GO:0005829">
    <property type="term" value="C:cytosol"/>
    <property type="evidence" value="ECO:0007669"/>
    <property type="project" value="TreeGrafter"/>
</dbReference>
<dbReference type="GO" id="GO:0005960">
    <property type="term" value="C:glycine cleavage complex"/>
    <property type="evidence" value="ECO:0007669"/>
    <property type="project" value="InterPro"/>
</dbReference>
<dbReference type="GO" id="GO:0019464">
    <property type="term" value="P:glycine decarboxylation via glycine cleavage system"/>
    <property type="evidence" value="ECO:0007669"/>
    <property type="project" value="UniProtKB-UniRule"/>
</dbReference>
<dbReference type="CDD" id="cd06848">
    <property type="entry name" value="GCS_H"/>
    <property type="match status" value="1"/>
</dbReference>
<dbReference type="Gene3D" id="2.40.50.100">
    <property type="match status" value="1"/>
</dbReference>
<dbReference type="HAMAP" id="MF_00272">
    <property type="entry name" value="GcvH"/>
    <property type="match status" value="1"/>
</dbReference>
<dbReference type="InterPro" id="IPR003016">
    <property type="entry name" value="2-oxoA_DH_lipoyl-BS"/>
</dbReference>
<dbReference type="InterPro" id="IPR000089">
    <property type="entry name" value="Biotin_lipoyl"/>
</dbReference>
<dbReference type="InterPro" id="IPR002930">
    <property type="entry name" value="GCV_H"/>
</dbReference>
<dbReference type="InterPro" id="IPR033753">
    <property type="entry name" value="GCV_H/Fam206"/>
</dbReference>
<dbReference type="InterPro" id="IPR017453">
    <property type="entry name" value="GCV_H_sub"/>
</dbReference>
<dbReference type="InterPro" id="IPR011053">
    <property type="entry name" value="Single_hybrid_motif"/>
</dbReference>
<dbReference type="NCBIfam" id="TIGR00527">
    <property type="entry name" value="gcvH"/>
    <property type="match status" value="1"/>
</dbReference>
<dbReference type="NCBIfam" id="NF002270">
    <property type="entry name" value="PRK01202.1"/>
    <property type="match status" value="1"/>
</dbReference>
<dbReference type="PANTHER" id="PTHR11715">
    <property type="entry name" value="GLYCINE CLEAVAGE SYSTEM H PROTEIN"/>
    <property type="match status" value="1"/>
</dbReference>
<dbReference type="PANTHER" id="PTHR11715:SF3">
    <property type="entry name" value="GLYCINE CLEAVAGE SYSTEM H PROTEIN-RELATED"/>
    <property type="match status" value="1"/>
</dbReference>
<dbReference type="Pfam" id="PF01597">
    <property type="entry name" value="GCV_H"/>
    <property type="match status" value="1"/>
</dbReference>
<dbReference type="SUPFAM" id="SSF51230">
    <property type="entry name" value="Single hybrid motif"/>
    <property type="match status" value="1"/>
</dbReference>
<dbReference type="PROSITE" id="PS50968">
    <property type="entry name" value="BIOTINYL_LIPOYL"/>
    <property type="match status" value="1"/>
</dbReference>
<dbReference type="PROSITE" id="PS00189">
    <property type="entry name" value="LIPOYL"/>
    <property type="match status" value="1"/>
</dbReference>
<protein>
    <recommendedName>
        <fullName evidence="1">Glycine cleavage system H protein</fullName>
    </recommendedName>
</protein>
<sequence length="128" mass="13209">MSSIPEGLKYSAEHEWIAEAGAAGTVRVGITDFAQDALGDVVYVDLPEVGTEVTAGTAVGEVESTKSVSDIYAPVSGTVAAVNDELDGEPGLVNSAPYEGGWLFEITLADEAQLEGLMDAEGYASHTS</sequence>
<proteinExistence type="inferred from homology"/>
<reference key="1">
    <citation type="journal article" date="2010" name="J. Bacteriol.">
        <title>Genome sequence of the Fleming strain of Micrococcus luteus, a simple free-living actinobacterium.</title>
        <authorList>
            <person name="Young M."/>
            <person name="Artsatbanov V."/>
            <person name="Beller H.R."/>
            <person name="Chandra G."/>
            <person name="Chater K.F."/>
            <person name="Dover L.G."/>
            <person name="Goh E.B."/>
            <person name="Kahan T."/>
            <person name="Kaprelyants A.S."/>
            <person name="Kyrpides N."/>
            <person name="Lapidus A."/>
            <person name="Lowry S.R."/>
            <person name="Lykidis A."/>
            <person name="Mahillon J."/>
            <person name="Markowitz V."/>
            <person name="Mavromatis K."/>
            <person name="Mukamolova G.V."/>
            <person name="Oren A."/>
            <person name="Rokem J.S."/>
            <person name="Smith M.C."/>
            <person name="Young D.I."/>
            <person name="Greenblatt C.L."/>
        </authorList>
    </citation>
    <scope>NUCLEOTIDE SEQUENCE [LARGE SCALE GENOMIC DNA]</scope>
    <source>
        <strain>ATCC 4698 / DSM 20030 / JCM 1464 / CCM 169 / CCUG 5858 / IAM 1056 / NBRC 3333 / NCIMB 9278 / NCTC 2665 / VKM Ac-2230</strain>
    </source>
</reference>
<keyword id="KW-0450">Lipoyl</keyword>
<keyword id="KW-1185">Reference proteome</keyword>